<feature type="chain" id="PRO_0000414295" description="U1 small nuclear ribonucleoprotein C">
    <location>
        <begin position="1"/>
        <end position="220"/>
    </location>
</feature>
<feature type="zinc finger region" description="Matrin-type" evidence="1">
    <location>
        <begin position="4"/>
        <end position="36"/>
    </location>
</feature>
<feature type="region of interest" description="Disordered" evidence="2">
    <location>
        <begin position="197"/>
        <end position="220"/>
    </location>
</feature>
<feature type="compositionally biased region" description="Pro residues" evidence="2">
    <location>
        <begin position="208"/>
        <end position="220"/>
    </location>
</feature>
<reference key="1">
    <citation type="journal article" date="2010" name="Nature">
        <title>Perigord black truffle genome uncovers evolutionary origins and mechanisms of symbiosis.</title>
        <authorList>
            <person name="Martin F."/>
            <person name="Kohler A."/>
            <person name="Murat C."/>
            <person name="Balestrini R."/>
            <person name="Coutinho P.M."/>
            <person name="Jaillon O."/>
            <person name="Montanini B."/>
            <person name="Morin E."/>
            <person name="Noel B."/>
            <person name="Percudani R."/>
            <person name="Porcel B."/>
            <person name="Rubini A."/>
            <person name="Amicucci A."/>
            <person name="Amselem J."/>
            <person name="Anthouard V."/>
            <person name="Arcioni S."/>
            <person name="Artiguenave F."/>
            <person name="Aury J.M."/>
            <person name="Ballario P."/>
            <person name="Bolchi A."/>
            <person name="Brenna A."/>
            <person name="Brun A."/>
            <person name="Buee M."/>
            <person name="Cantarel B."/>
            <person name="Chevalier G."/>
            <person name="Couloux A."/>
            <person name="Da Silva C."/>
            <person name="Denoeud F."/>
            <person name="Duplessis S."/>
            <person name="Ghignone S."/>
            <person name="Hilselberger B."/>
            <person name="Iotti M."/>
            <person name="Marcais B."/>
            <person name="Mello A."/>
            <person name="Miranda M."/>
            <person name="Pacioni G."/>
            <person name="Quesneville H."/>
            <person name="Riccioni C."/>
            <person name="Ruotolo R."/>
            <person name="Splivallo R."/>
            <person name="Stocchi V."/>
            <person name="Tisserant E."/>
            <person name="Viscomi A.R."/>
            <person name="Zambonelli A."/>
            <person name="Zampieri E."/>
            <person name="Henrissat B."/>
            <person name="Lebrun M.H."/>
            <person name="Paolocci F."/>
            <person name="Bonfante P."/>
            <person name="Ottonello S."/>
            <person name="Wincker P."/>
        </authorList>
    </citation>
    <scope>NUCLEOTIDE SEQUENCE [LARGE SCALE GENOMIC DNA]</scope>
    <source>
        <strain>Mel28</strain>
    </source>
</reference>
<proteinExistence type="inferred from homology"/>
<accession>D5GDH4</accession>
<protein>
    <recommendedName>
        <fullName evidence="1">U1 small nuclear ribonucleoprotein C</fullName>
        <shortName evidence="1">U1 snRNP C</shortName>
        <shortName evidence="1">U1-C</shortName>
        <shortName evidence="1">U1C</shortName>
    </recommendedName>
</protein>
<dbReference type="EMBL" id="FN430144">
    <property type="protein sequence ID" value="CAZ82567.1"/>
    <property type="molecule type" value="Genomic_DNA"/>
</dbReference>
<dbReference type="RefSeq" id="XP_002838376.1">
    <property type="nucleotide sequence ID" value="XM_002838330.1"/>
</dbReference>
<dbReference type="SMR" id="D5GDH4"/>
<dbReference type="STRING" id="656061.D5GDH4"/>
<dbReference type="EnsemblFungi" id="CAZ82567">
    <property type="protein sequence ID" value="CAZ82567"/>
    <property type="gene ID" value="GSTUM_00001021001"/>
</dbReference>
<dbReference type="GeneID" id="9184023"/>
<dbReference type="KEGG" id="tml:GSTUM_00001021001"/>
<dbReference type="eggNOG" id="KOG3454">
    <property type="taxonomic scope" value="Eukaryota"/>
</dbReference>
<dbReference type="HOGENOM" id="CLU_079697_2_0_1"/>
<dbReference type="InParanoid" id="D5GDH4"/>
<dbReference type="OMA" id="RRIMPRY"/>
<dbReference type="Proteomes" id="UP000006911">
    <property type="component" value="Unassembled WGS sequence"/>
</dbReference>
<dbReference type="GO" id="GO:0000243">
    <property type="term" value="C:commitment complex"/>
    <property type="evidence" value="ECO:0007669"/>
    <property type="project" value="UniProtKB-UniRule"/>
</dbReference>
<dbReference type="GO" id="GO:0005685">
    <property type="term" value="C:U1 snRNP"/>
    <property type="evidence" value="ECO:0007669"/>
    <property type="project" value="UniProtKB-UniRule"/>
</dbReference>
<dbReference type="GO" id="GO:0071004">
    <property type="term" value="C:U2-type prespliceosome"/>
    <property type="evidence" value="ECO:0007669"/>
    <property type="project" value="UniProtKB-UniRule"/>
</dbReference>
<dbReference type="GO" id="GO:0003729">
    <property type="term" value="F:mRNA binding"/>
    <property type="evidence" value="ECO:0007669"/>
    <property type="project" value="UniProtKB-UniRule"/>
</dbReference>
<dbReference type="GO" id="GO:0030627">
    <property type="term" value="F:pre-mRNA 5'-splice site binding"/>
    <property type="evidence" value="ECO:0007669"/>
    <property type="project" value="InterPro"/>
</dbReference>
<dbReference type="GO" id="GO:0030619">
    <property type="term" value="F:U1 snRNA binding"/>
    <property type="evidence" value="ECO:0007669"/>
    <property type="project" value="UniProtKB-UniRule"/>
</dbReference>
<dbReference type="GO" id="GO:0008270">
    <property type="term" value="F:zinc ion binding"/>
    <property type="evidence" value="ECO:0007669"/>
    <property type="project" value="UniProtKB-UniRule"/>
</dbReference>
<dbReference type="GO" id="GO:0000395">
    <property type="term" value="P:mRNA 5'-splice site recognition"/>
    <property type="evidence" value="ECO:0007669"/>
    <property type="project" value="UniProtKB-UniRule"/>
</dbReference>
<dbReference type="GO" id="GO:0000387">
    <property type="term" value="P:spliceosomal snRNP assembly"/>
    <property type="evidence" value="ECO:0007669"/>
    <property type="project" value="UniProtKB-UniRule"/>
</dbReference>
<dbReference type="FunFam" id="3.30.160.60:FF:000059">
    <property type="entry name" value="U1 small nuclear ribonucleoprotein C"/>
    <property type="match status" value="1"/>
</dbReference>
<dbReference type="Gene3D" id="3.30.160.60">
    <property type="entry name" value="Classic Zinc Finger"/>
    <property type="match status" value="1"/>
</dbReference>
<dbReference type="HAMAP" id="MF_03153">
    <property type="entry name" value="U1_C"/>
    <property type="match status" value="1"/>
</dbReference>
<dbReference type="InterPro" id="IPR000690">
    <property type="entry name" value="Matrin/U1-C_Znf_C2H2"/>
</dbReference>
<dbReference type="InterPro" id="IPR003604">
    <property type="entry name" value="Matrin/U1-like-C_Znf_C2H2"/>
</dbReference>
<dbReference type="InterPro" id="IPR013085">
    <property type="entry name" value="U1-CZ_Znf_C2H2"/>
</dbReference>
<dbReference type="InterPro" id="IPR017340">
    <property type="entry name" value="U1_snRNP-C"/>
</dbReference>
<dbReference type="InterPro" id="IPR036236">
    <property type="entry name" value="Znf_C2H2_sf"/>
</dbReference>
<dbReference type="PANTHER" id="PTHR31148">
    <property type="entry name" value="U1 SMALL NUCLEAR RIBONUCLEOPROTEIN C"/>
    <property type="match status" value="1"/>
</dbReference>
<dbReference type="PANTHER" id="PTHR31148:SF1">
    <property type="entry name" value="U1 SMALL NUCLEAR RIBONUCLEOPROTEIN C"/>
    <property type="match status" value="1"/>
</dbReference>
<dbReference type="Pfam" id="PF06220">
    <property type="entry name" value="zf-U1"/>
    <property type="match status" value="1"/>
</dbReference>
<dbReference type="SMART" id="SM00451">
    <property type="entry name" value="ZnF_U1"/>
    <property type="match status" value="1"/>
</dbReference>
<dbReference type="SUPFAM" id="SSF57667">
    <property type="entry name" value="beta-beta-alpha zinc fingers"/>
    <property type="match status" value="1"/>
</dbReference>
<dbReference type="PROSITE" id="PS50171">
    <property type="entry name" value="ZF_MATRIN"/>
    <property type="match status" value="1"/>
</dbReference>
<comment type="function">
    <text evidence="1">Component of the spliceosomal U1 snRNP, which is essential for recognition of the pre-mRNA 5' splice-site and the subsequent assembly of the spliceosome. U1-C is directly involved in initial 5' splice-site recognition for both constitutive and regulated alternative splicing. The interaction with the 5' splice-site seems to precede base-pairing between the pre-mRNA and the U1 snRNA. Stimulates commitment or early (E) complex formation by stabilizing the base pairing of the 5' end of the U1 snRNA and the 5' splice-site region.</text>
</comment>
<comment type="subunit">
    <text evidence="1">U1 snRNP is composed of the 7 core Sm proteins B/B', D1, D2, D3, E, F and G that assemble in a heptameric protein ring on the Sm site of the small nuclear RNA to form the core snRNP, and at least 3 U1 snRNP-specific proteins U1-70K, U1-A and U1-C. U1-C interacts with U1 snRNA and the 5' splice-site region of the pre-mRNA.</text>
</comment>
<comment type="subcellular location">
    <subcellularLocation>
        <location evidence="1">Nucleus</location>
    </subcellularLocation>
</comment>
<comment type="similarity">
    <text evidence="1">Belongs to the U1 small nuclear ribonucleoprotein C family.</text>
</comment>
<name>RU1C_TUBMM</name>
<keyword id="KW-0479">Metal-binding</keyword>
<keyword id="KW-0539">Nucleus</keyword>
<keyword id="KW-1185">Reference proteome</keyword>
<keyword id="KW-0687">Ribonucleoprotein</keyword>
<keyword id="KW-0694">RNA-binding</keyword>
<keyword id="KW-0862">Zinc</keyword>
<keyword id="KW-0863">Zinc-finger</keyword>
<sequence>MPKFFCDYCDVYLTHDSISVRKAHNSGRNHLRNVVDYYQQIGHEKAQSVIDSITSSYAAEGQPMPSVHSTTPGAGGAGSVGAGGFPLLPPSAAAAAAAAGLQMPLSLPPPPFGFPARPGMMVPPPPPPFGFPPPPLGRGGAAAGFSGFPGMDAAGGGAGGGVQPQLLPGMVVPPGFVPPPGGMMVPPPGAGFTMPPPLGGFPAGAPLPGAPPGYGPPGAK</sequence>
<organism>
    <name type="scientific">Tuber melanosporum (strain Mel28)</name>
    <name type="common">Perigord black truffle</name>
    <dbReference type="NCBI Taxonomy" id="656061"/>
    <lineage>
        <taxon>Eukaryota</taxon>
        <taxon>Fungi</taxon>
        <taxon>Dikarya</taxon>
        <taxon>Ascomycota</taxon>
        <taxon>Pezizomycotina</taxon>
        <taxon>Pezizomycetes</taxon>
        <taxon>Pezizales</taxon>
        <taxon>Tuberaceae</taxon>
        <taxon>Tuber</taxon>
    </lineage>
</organism>
<evidence type="ECO:0000255" key="1">
    <source>
        <dbReference type="HAMAP-Rule" id="MF_03153"/>
    </source>
</evidence>
<evidence type="ECO:0000256" key="2">
    <source>
        <dbReference type="SAM" id="MobiDB-lite"/>
    </source>
</evidence>
<gene>
    <name type="ORF">GSTUM_00001021001</name>
</gene>